<feature type="chain" id="PRO_1000007843" description="4-diphosphocytidyl-2-C-methyl-D-erythritol kinase">
    <location>
        <begin position="1"/>
        <end position="283"/>
    </location>
</feature>
<feature type="active site" evidence="1">
    <location>
        <position position="10"/>
    </location>
</feature>
<feature type="active site" evidence="1">
    <location>
        <position position="141"/>
    </location>
</feature>
<feature type="binding site" evidence="1">
    <location>
        <begin position="99"/>
        <end position="109"/>
    </location>
    <ligand>
        <name>ATP</name>
        <dbReference type="ChEBI" id="CHEBI:30616"/>
    </ligand>
</feature>
<protein>
    <recommendedName>
        <fullName evidence="1">4-diphosphocytidyl-2-C-methyl-D-erythritol kinase</fullName>
        <shortName evidence="1">CMK</shortName>
        <ecNumber evidence="1">2.7.1.148</ecNumber>
    </recommendedName>
    <alternativeName>
        <fullName evidence="1">4-(cytidine-5'-diphospho)-2-C-methyl-D-erythritol kinase</fullName>
    </alternativeName>
</protein>
<reference key="1">
    <citation type="journal article" date="2006" name="Proc. Natl. Acad. Sci. U.S.A.">
        <title>Identification of genes subject to positive selection in uropathogenic strains of Escherichia coli: a comparative genomics approach.</title>
        <authorList>
            <person name="Chen S.L."/>
            <person name="Hung C.-S."/>
            <person name="Xu J."/>
            <person name="Reigstad C.S."/>
            <person name="Magrini V."/>
            <person name="Sabo A."/>
            <person name="Blasiar D."/>
            <person name="Bieri T."/>
            <person name="Meyer R.R."/>
            <person name="Ozersky P."/>
            <person name="Armstrong J.R."/>
            <person name="Fulton R.S."/>
            <person name="Latreille J.P."/>
            <person name="Spieth J."/>
            <person name="Hooton T.M."/>
            <person name="Mardis E.R."/>
            <person name="Hultgren S.J."/>
            <person name="Gordon J.I."/>
        </authorList>
    </citation>
    <scope>NUCLEOTIDE SEQUENCE [LARGE SCALE GENOMIC DNA]</scope>
    <source>
        <strain>UTI89 / UPEC</strain>
    </source>
</reference>
<accession>Q1RCN0</accession>
<keyword id="KW-0067">ATP-binding</keyword>
<keyword id="KW-0414">Isoprene biosynthesis</keyword>
<keyword id="KW-0418">Kinase</keyword>
<keyword id="KW-0547">Nucleotide-binding</keyword>
<keyword id="KW-0808">Transferase</keyword>
<name>ISPE_ECOUT</name>
<organism>
    <name type="scientific">Escherichia coli (strain UTI89 / UPEC)</name>
    <dbReference type="NCBI Taxonomy" id="364106"/>
    <lineage>
        <taxon>Bacteria</taxon>
        <taxon>Pseudomonadati</taxon>
        <taxon>Pseudomonadota</taxon>
        <taxon>Gammaproteobacteria</taxon>
        <taxon>Enterobacterales</taxon>
        <taxon>Enterobacteriaceae</taxon>
        <taxon>Escherichia</taxon>
    </lineage>
</organism>
<dbReference type="EC" id="2.7.1.148" evidence="1"/>
<dbReference type="EMBL" id="CP000243">
    <property type="protein sequence ID" value="ABE06884.1"/>
    <property type="molecule type" value="Genomic_DNA"/>
</dbReference>
<dbReference type="RefSeq" id="WP_001260346.1">
    <property type="nucleotide sequence ID" value="NZ_CP064825.1"/>
</dbReference>
<dbReference type="SMR" id="Q1RCN0"/>
<dbReference type="KEGG" id="eci:UTI89_C1402"/>
<dbReference type="HOGENOM" id="CLU_053057_3_0_6"/>
<dbReference type="UniPathway" id="UPA00056">
    <property type="reaction ID" value="UER00094"/>
</dbReference>
<dbReference type="Proteomes" id="UP000001952">
    <property type="component" value="Chromosome"/>
</dbReference>
<dbReference type="GO" id="GO:0050515">
    <property type="term" value="F:4-(cytidine 5'-diphospho)-2-C-methyl-D-erythritol kinase activity"/>
    <property type="evidence" value="ECO:0007669"/>
    <property type="project" value="UniProtKB-UniRule"/>
</dbReference>
<dbReference type="GO" id="GO:0005524">
    <property type="term" value="F:ATP binding"/>
    <property type="evidence" value="ECO:0007669"/>
    <property type="project" value="UniProtKB-UniRule"/>
</dbReference>
<dbReference type="GO" id="GO:0019288">
    <property type="term" value="P:isopentenyl diphosphate biosynthetic process, methylerythritol 4-phosphate pathway"/>
    <property type="evidence" value="ECO:0007669"/>
    <property type="project" value="UniProtKB-UniRule"/>
</dbReference>
<dbReference type="GO" id="GO:0016114">
    <property type="term" value="P:terpenoid biosynthetic process"/>
    <property type="evidence" value="ECO:0007669"/>
    <property type="project" value="InterPro"/>
</dbReference>
<dbReference type="FunFam" id="3.30.230.10:FF:000022">
    <property type="entry name" value="4-diphosphocytidyl-2-C-methyl-D-erythritol kinase"/>
    <property type="match status" value="1"/>
</dbReference>
<dbReference type="FunFam" id="3.30.70.890:FF:000004">
    <property type="entry name" value="4-diphosphocytidyl-2-C-methyl-D-erythritol kinase"/>
    <property type="match status" value="1"/>
</dbReference>
<dbReference type="Gene3D" id="3.30.230.10">
    <property type="match status" value="1"/>
</dbReference>
<dbReference type="Gene3D" id="3.30.70.890">
    <property type="entry name" value="GHMP kinase, C-terminal domain"/>
    <property type="match status" value="1"/>
</dbReference>
<dbReference type="HAMAP" id="MF_00061">
    <property type="entry name" value="IspE"/>
    <property type="match status" value="1"/>
</dbReference>
<dbReference type="InterPro" id="IPR013750">
    <property type="entry name" value="GHMP_kinase_C_dom"/>
</dbReference>
<dbReference type="InterPro" id="IPR036554">
    <property type="entry name" value="GHMP_kinase_C_sf"/>
</dbReference>
<dbReference type="InterPro" id="IPR006204">
    <property type="entry name" value="GHMP_kinase_N_dom"/>
</dbReference>
<dbReference type="InterPro" id="IPR004424">
    <property type="entry name" value="IspE"/>
</dbReference>
<dbReference type="InterPro" id="IPR020568">
    <property type="entry name" value="Ribosomal_Su5_D2-typ_SF"/>
</dbReference>
<dbReference type="InterPro" id="IPR014721">
    <property type="entry name" value="Ribsml_uS5_D2-typ_fold_subgr"/>
</dbReference>
<dbReference type="NCBIfam" id="TIGR00154">
    <property type="entry name" value="ispE"/>
    <property type="match status" value="1"/>
</dbReference>
<dbReference type="PANTHER" id="PTHR43527">
    <property type="entry name" value="4-DIPHOSPHOCYTIDYL-2-C-METHYL-D-ERYTHRITOL KINASE, CHLOROPLASTIC"/>
    <property type="match status" value="1"/>
</dbReference>
<dbReference type="PANTHER" id="PTHR43527:SF2">
    <property type="entry name" value="4-DIPHOSPHOCYTIDYL-2-C-METHYL-D-ERYTHRITOL KINASE, CHLOROPLASTIC"/>
    <property type="match status" value="1"/>
</dbReference>
<dbReference type="Pfam" id="PF08544">
    <property type="entry name" value="GHMP_kinases_C"/>
    <property type="match status" value="1"/>
</dbReference>
<dbReference type="Pfam" id="PF00288">
    <property type="entry name" value="GHMP_kinases_N"/>
    <property type="match status" value="1"/>
</dbReference>
<dbReference type="PIRSF" id="PIRSF010376">
    <property type="entry name" value="IspE"/>
    <property type="match status" value="1"/>
</dbReference>
<dbReference type="SUPFAM" id="SSF55060">
    <property type="entry name" value="GHMP Kinase, C-terminal domain"/>
    <property type="match status" value="1"/>
</dbReference>
<dbReference type="SUPFAM" id="SSF54211">
    <property type="entry name" value="Ribosomal protein S5 domain 2-like"/>
    <property type="match status" value="1"/>
</dbReference>
<sequence>MRTQWPSPAKLNLFLYITGQRADGYHTLQTLFQFLDYGDTISIELRDDGDIRLLTPVEGVEHEDNLIVRAARLLMKTAADSGRLSTGSGANISIDKRLPMGGGLGGGSSNAATVLVALNHLWQCGLSMDELAEMGLTLGADVPVFVRGHAAFAEGVGEILTPVDPPEKWYLVAHPGVSIPTPVIFKDPELPRNTPKRSIETLLKCEFSNDCEVIARKRFREVDAVLSWLLEYAPSRLTGTGACVFAEFDTESEARQVLEQAPEWLNGFVAKGVNLSPLHRAML</sequence>
<evidence type="ECO:0000255" key="1">
    <source>
        <dbReference type="HAMAP-Rule" id="MF_00061"/>
    </source>
</evidence>
<comment type="function">
    <text evidence="1">Catalyzes the phosphorylation of the position 2 hydroxy group of 4-diphosphocytidyl-2C-methyl-D-erythritol.</text>
</comment>
<comment type="catalytic activity">
    <reaction evidence="1">
        <text>4-CDP-2-C-methyl-D-erythritol + ATP = 4-CDP-2-C-methyl-D-erythritol 2-phosphate + ADP + H(+)</text>
        <dbReference type="Rhea" id="RHEA:18437"/>
        <dbReference type="ChEBI" id="CHEBI:15378"/>
        <dbReference type="ChEBI" id="CHEBI:30616"/>
        <dbReference type="ChEBI" id="CHEBI:57823"/>
        <dbReference type="ChEBI" id="CHEBI:57919"/>
        <dbReference type="ChEBI" id="CHEBI:456216"/>
        <dbReference type="EC" id="2.7.1.148"/>
    </reaction>
</comment>
<comment type="pathway">
    <text evidence="1">Isoprenoid biosynthesis; isopentenyl diphosphate biosynthesis via DXP pathway; isopentenyl diphosphate from 1-deoxy-D-xylulose 5-phosphate: step 3/6.</text>
</comment>
<comment type="subunit">
    <text evidence="1">Homodimer.</text>
</comment>
<comment type="similarity">
    <text evidence="1">Belongs to the GHMP kinase family. IspE subfamily.</text>
</comment>
<proteinExistence type="inferred from homology"/>
<gene>
    <name evidence="1" type="primary">ispE</name>
    <name type="ordered locus">UTI89_C1402</name>
</gene>